<gene>
    <name type="ordered locus">Pret-003</name>
</gene>
<evidence type="ECO:0000250" key="1"/>
<evidence type="ECO:0000305" key="2"/>
<feature type="chain" id="PRO_0000373248" description="Protein MGF 360-2L">
    <location>
        <begin position="1"/>
        <end position="351"/>
    </location>
</feature>
<comment type="function">
    <text evidence="1">Plays a role in virus cell tropism, and may be required for efficient virus replication in macrophages.</text>
</comment>
<comment type="similarity">
    <text evidence="2">Belongs to the asfivirus MGF 360 family.</text>
</comment>
<proteinExistence type="inferred from homology"/>
<sequence>MSTPSSLQALVKKVLATQHISKEHYFILKYCGLWWHGAPIMLSTNENNQLMIKSAIFKDGLDLNLALMKAVQENNYDLIELFTEWGADITSSLITVNTEHTWNFCRELGAKILNEMDIVHIFYKIHRIKTSSNIILCHKLLSNKPLFQNIEGLKIIICCFLEKIPINFILNEITFNEMLTRYWYSMAIQYNLTEAIQYFYQRYSHFKDWRLICGLSFNNVSDLHDHIKKVDMNIDEMMYLACMRDSNFLTIFYCFVLGADINRAMVTAVKKFYTNNLFFCIDLGANAFEESLELAKQKNNDILAELLSFKDYYSSNASLLSLKTTDPEKINALLKNYKSKNIMRYKKLSRK</sequence>
<organism>
    <name type="scientific">African swine fever virus (isolate Tick/South Africa/Pretoriuskop Pr4/1996)</name>
    <name type="common">ASFV</name>
    <dbReference type="NCBI Taxonomy" id="561443"/>
    <lineage>
        <taxon>Viruses</taxon>
        <taxon>Varidnaviria</taxon>
        <taxon>Bamfordvirae</taxon>
        <taxon>Nucleocytoviricota</taxon>
        <taxon>Pokkesviricetes</taxon>
        <taxon>Asfuvirales</taxon>
        <taxon>Asfarviridae</taxon>
        <taxon>Asfivirus</taxon>
        <taxon>African swine fever virus</taxon>
    </lineage>
</organism>
<organismHost>
    <name type="scientific">Ornithodoros</name>
    <name type="common">relapsing fever ticks</name>
    <dbReference type="NCBI Taxonomy" id="6937"/>
</organismHost>
<organismHost>
    <name type="scientific">Phacochoerus aethiopicus</name>
    <name type="common">Warthog</name>
    <dbReference type="NCBI Taxonomy" id="85517"/>
</organismHost>
<organismHost>
    <name type="scientific">Phacochoerus africanus</name>
    <name type="common">Warthog</name>
    <dbReference type="NCBI Taxonomy" id="41426"/>
</organismHost>
<organismHost>
    <name type="scientific">Potamochoerus larvatus</name>
    <name type="common">Bushpig</name>
    <dbReference type="NCBI Taxonomy" id="273792"/>
</organismHost>
<organismHost>
    <name type="scientific">Sus scrofa</name>
    <name type="common">Pig</name>
    <dbReference type="NCBI Taxonomy" id="9823"/>
</organismHost>
<protein>
    <recommendedName>
        <fullName>Protein MGF 360-2L</fullName>
    </recommendedName>
</protein>
<reference key="1">
    <citation type="submission" date="2003-03" db="EMBL/GenBank/DDBJ databases">
        <title>African swine fever virus genomes.</title>
        <authorList>
            <person name="Kutish G.F."/>
            <person name="Rock D.L."/>
        </authorList>
    </citation>
    <scope>NUCLEOTIDE SEQUENCE [LARGE SCALE GENOMIC DNA]</scope>
</reference>
<accession>P0C9M2</accession>
<dbReference type="EMBL" id="AY261363">
    <property type="status" value="NOT_ANNOTATED_CDS"/>
    <property type="molecule type" value="Genomic_DNA"/>
</dbReference>
<dbReference type="SMR" id="P0C9M2"/>
<dbReference type="Proteomes" id="UP000000859">
    <property type="component" value="Segment"/>
</dbReference>
<dbReference type="GO" id="GO:0042330">
    <property type="term" value="P:taxis"/>
    <property type="evidence" value="ECO:0007669"/>
    <property type="project" value="InterPro"/>
</dbReference>
<dbReference type="InterPro" id="IPR002595">
    <property type="entry name" value="ASFV_MGF360"/>
</dbReference>
<dbReference type="Pfam" id="PF01671">
    <property type="entry name" value="ASFV_360"/>
    <property type="match status" value="1"/>
</dbReference>
<name>3602L_ASFP4</name>